<keyword id="KW-0007">Acetylation</keyword>
<keyword id="KW-0158">Chromosome</keyword>
<keyword id="KW-0238">DNA-binding</keyword>
<keyword id="KW-1017">Isopeptide bond</keyword>
<keyword id="KW-0544">Nucleosome core</keyword>
<keyword id="KW-0539">Nucleus</keyword>
<keyword id="KW-0597">Phosphoprotein</keyword>
<keyword id="KW-1185">Reference proteome</keyword>
<keyword id="KW-0832">Ubl conjugation</keyword>
<organism>
    <name type="scientific">Meyerozyma guilliermondii (strain ATCC 6260 / CBS 566 / DSM 6381 / JCM 1539 / NBRC 10279 / NRRL Y-324)</name>
    <name type="common">Yeast</name>
    <name type="synonym">Candida guilliermondii</name>
    <dbReference type="NCBI Taxonomy" id="294746"/>
    <lineage>
        <taxon>Eukaryota</taxon>
        <taxon>Fungi</taxon>
        <taxon>Dikarya</taxon>
        <taxon>Ascomycota</taxon>
        <taxon>Saccharomycotina</taxon>
        <taxon>Pichiomycetes</taxon>
        <taxon>Debaryomycetaceae</taxon>
        <taxon>Meyerozyma</taxon>
    </lineage>
</organism>
<protein>
    <recommendedName>
        <fullName>Histone H2B.1</fullName>
    </recommendedName>
</protein>
<dbReference type="EMBL" id="CH408158">
    <property type="protein sequence ID" value="EDK39344.1"/>
    <property type="molecule type" value="Genomic_DNA"/>
</dbReference>
<dbReference type="RefSeq" id="XP_001484061.1">
    <property type="nucleotide sequence ID" value="XM_001484011.1"/>
</dbReference>
<dbReference type="SMR" id="A5DJJ1"/>
<dbReference type="FunCoup" id="A5DJJ1">
    <property type="interactions" value="1114"/>
</dbReference>
<dbReference type="STRING" id="294746.A5DJJ1"/>
<dbReference type="GeneID" id="5126025"/>
<dbReference type="KEGG" id="pgu:PGUG_03442"/>
<dbReference type="VEuPathDB" id="FungiDB:PGUG_03442"/>
<dbReference type="eggNOG" id="KOG1744">
    <property type="taxonomic scope" value="Eukaryota"/>
</dbReference>
<dbReference type="HOGENOM" id="CLU_075666_1_3_1"/>
<dbReference type="InParanoid" id="A5DJJ1"/>
<dbReference type="OMA" id="RITIEAC"/>
<dbReference type="OrthoDB" id="10254238at2759"/>
<dbReference type="Proteomes" id="UP000001997">
    <property type="component" value="Unassembled WGS sequence"/>
</dbReference>
<dbReference type="GO" id="GO:0000786">
    <property type="term" value="C:nucleosome"/>
    <property type="evidence" value="ECO:0007669"/>
    <property type="project" value="UniProtKB-KW"/>
</dbReference>
<dbReference type="GO" id="GO:0005634">
    <property type="term" value="C:nucleus"/>
    <property type="evidence" value="ECO:0007669"/>
    <property type="project" value="UniProtKB-SubCell"/>
</dbReference>
<dbReference type="GO" id="GO:0003677">
    <property type="term" value="F:DNA binding"/>
    <property type="evidence" value="ECO:0007669"/>
    <property type="project" value="UniProtKB-KW"/>
</dbReference>
<dbReference type="GO" id="GO:0046982">
    <property type="term" value="F:protein heterodimerization activity"/>
    <property type="evidence" value="ECO:0007669"/>
    <property type="project" value="InterPro"/>
</dbReference>
<dbReference type="GO" id="GO:0030527">
    <property type="term" value="F:structural constituent of chromatin"/>
    <property type="evidence" value="ECO:0007669"/>
    <property type="project" value="InterPro"/>
</dbReference>
<dbReference type="CDD" id="cd22910">
    <property type="entry name" value="HFD_H2B"/>
    <property type="match status" value="1"/>
</dbReference>
<dbReference type="FunFam" id="1.10.20.10:FF:000014">
    <property type="entry name" value="Histone H2B"/>
    <property type="match status" value="1"/>
</dbReference>
<dbReference type="Gene3D" id="1.10.20.10">
    <property type="entry name" value="Histone, subunit A"/>
    <property type="match status" value="1"/>
</dbReference>
<dbReference type="InterPro" id="IPR009072">
    <property type="entry name" value="Histone-fold"/>
</dbReference>
<dbReference type="InterPro" id="IPR007125">
    <property type="entry name" value="Histone_H2A/H2B/H3"/>
</dbReference>
<dbReference type="InterPro" id="IPR000558">
    <property type="entry name" value="Histone_H2B"/>
</dbReference>
<dbReference type="PANTHER" id="PTHR23428">
    <property type="entry name" value="HISTONE H2B"/>
    <property type="match status" value="1"/>
</dbReference>
<dbReference type="Pfam" id="PF00125">
    <property type="entry name" value="Histone"/>
    <property type="match status" value="1"/>
</dbReference>
<dbReference type="PRINTS" id="PR00621">
    <property type="entry name" value="HISTONEH2B"/>
</dbReference>
<dbReference type="SMART" id="SM00427">
    <property type="entry name" value="H2B"/>
    <property type="match status" value="1"/>
</dbReference>
<dbReference type="SUPFAM" id="SSF47113">
    <property type="entry name" value="Histone-fold"/>
    <property type="match status" value="1"/>
</dbReference>
<proteinExistence type="inferred from homology"/>
<feature type="initiator methionine" description="Removed" evidence="1">
    <location>
        <position position="1"/>
    </location>
</feature>
<feature type="chain" id="PRO_0000297852" description="Histone H2B.1">
    <location>
        <begin position="2"/>
        <end position="129"/>
    </location>
</feature>
<feature type="region of interest" description="Disordered" evidence="2">
    <location>
        <begin position="1"/>
        <end position="37"/>
    </location>
</feature>
<feature type="compositionally biased region" description="Basic and acidic residues" evidence="2">
    <location>
        <begin position="1"/>
        <end position="19"/>
    </location>
</feature>
<feature type="modified residue" description="N6-acetyllysine; alternate" evidence="1">
    <location>
        <position position="7"/>
    </location>
</feature>
<feature type="modified residue" description="N6-acetyllysine; alternate" evidence="1">
    <location>
        <position position="8"/>
    </location>
</feature>
<feature type="modified residue" description="Phosphoserine" evidence="1">
    <location>
        <position position="11"/>
    </location>
</feature>
<feature type="modified residue" description="N6-acetyllysine" evidence="1">
    <location>
        <position position="12"/>
    </location>
</feature>
<feature type="modified residue" description="N6-acetyllysine; alternate" evidence="1">
    <location>
        <position position="17"/>
    </location>
</feature>
<feature type="cross-link" description="Glycyl lysine isopeptide (Lys-Gly) (interchain with G-Cter in SUMO); alternate" evidence="1">
    <location>
        <position position="7"/>
    </location>
</feature>
<feature type="cross-link" description="Glycyl lysine isopeptide (Lys-Gly) (interchain with G-Cter in SUMO); alternate" evidence="1">
    <location>
        <position position="8"/>
    </location>
</feature>
<feature type="cross-link" description="Glycyl lysine isopeptide (Lys-Gly) (interchain with G-Cter in SUMO); alternate" evidence="1">
    <location>
        <position position="17"/>
    </location>
</feature>
<feature type="cross-link" description="Glycyl lysine isopeptide (Lys-Gly) (interchain with G-Cter in SUMO)" evidence="1">
    <location>
        <position position="18"/>
    </location>
</feature>
<feature type="cross-link" description="Glycyl lysine isopeptide (Lys-Gly) (interchain with G-Cter in ubiquitin)" evidence="1">
    <location>
        <position position="123"/>
    </location>
</feature>
<evidence type="ECO:0000250" key="1"/>
<evidence type="ECO:0000256" key="2">
    <source>
        <dbReference type="SAM" id="MobiDB-lite"/>
    </source>
</evidence>
<evidence type="ECO:0000305" key="3"/>
<gene>
    <name type="primary">HTB1</name>
    <name type="ORF">PGUG_03442</name>
</gene>
<name>H2B1_PICGU</name>
<comment type="function">
    <text>Core component of nucleosome. Nucleosomes wrap and compact DNA into chromatin, limiting DNA accessibility to the cellular machineries which require DNA as a template. Histones thereby play a central role in transcription regulation, DNA repair, DNA replication and chromosomal stability. DNA accessibility is regulated via a complex set of post-translational modifications of histones, also called histone code, and nucleosome remodeling.</text>
</comment>
<comment type="subunit">
    <text>The nucleosome is a histone octamer containing two molecules each of H2A, H2B, H3 and H4 assembled in one H3-H4 heterotetramer and two H2A-H2B heterodimers. The octamer wraps approximately 147 bp of DNA.</text>
</comment>
<comment type="subcellular location">
    <subcellularLocation>
        <location evidence="1">Nucleus</location>
    </subcellularLocation>
    <subcellularLocation>
        <location evidence="1">Chromosome</location>
    </subcellularLocation>
</comment>
<comment type="PTM">
    <text evidence="1">Monoubiquitinated by the UBC2-BRE1 complex to form H2BK123ub1. H2BK123ub1 gives a specific tag for epigenetic transcriptional activation and is also prerequisite for H3K4me and H3K79me formation. H2BK123ub1 also modulates the formation of double-strand breaks during meiosis and is a prerequisite for DNA-damage checkpoint activation (By similarity).</text>
</comment>
<comment type="PTM">
    <text evidence="1">Phosphorylated by STE20 to form H2BS10ph during progression through meiotic prophase. May be correlated with chromosome condensation (By similarity).</text>
</comment>
<comment type="PTM">
    <text evidence="1">Acetylated by GCN5 to form H2BK11ac and H2BK16ac. H2BK16ac can also be formed by ESA1. Acetylation of N-terminal lysines and particularly formation of H2BK11acK16ac has a positive effect on transcription (By similarity).</text>
</comment>
<comment type="PTM">
    <text evidence="1">Sumoylation to form H2BK6su or H2BK7su, and probably also H2BK16su or H2BK17su, occurs preferentially near the telomeres and represses gene transcription.</text>
</comment>
<comment type="similarity">
    <text evidence="3">Belongs to the histone H2B family.</text>
</comment>
<comment type="caution">
    <text evidence="3">To ensure consistency between histone entries, we follow the 'Brno' nomenclature for histone modifications, with positions referring to those used in the literature for the 'closest' model organism. Due to slight variations in histone sequences between organisms and to the presence of initiator methionine in UniProtKB/Swiss-Prot sequences, the actual positions of modified amino acids in the sequence generally differ. In this entry the following conventions are used: H2BK6ac = acetylated Lys-7; H2BK6su = sumoylated Lys-7; H2BK7ac = acetylated Lys-8; H2BK7su = sumoylated Lys-8; H2BS10ph = phosphorylated Ser-11; H2BK11ac = acetylated Lys-12; H2BK16ac = acetylated Lys-17; H2BK16su = sumoylated Lys-17; H2BK17su = sumoylated Lys-18; H2BK123ub1 = monoubiquitinated Lys-123.</text>
</comment>
<reference key="1">
    <citation type="journal article" date="2009" name="Nature">
        <title>Evolution of pathogenicity and sexual reproduction in eight Candida genomes.</title>
        <authorList>
            <person name="Butler G."/>
            <person name="Rasmussen M.D."/>
            <person name="Lin M.F."/>
            <person name="Santos M.A.S."/>
            <person name="Sakthikumar S."/>
            <person name="Munro C.A."/>
            <person name="Rheinbay E."/>
            <person name="Grabherr M."/>
            <person name="Forche A."/>
            <person name="Reedy J.L."/>
            <person name="Agrafioti I."/>
            <person name="Arnaud M.B."/>
            <person name="Bates S."/>
            <person name="Brown A.J.P."/>
            <person name="Brunke S."/>
            <person name="Costanzo M.C."/>
            <person name="Fitzpatrick D.A."/>
            <person name="de Groot P.W.J."/>
            <person name="Harris D."/>
            <person name="Hoyer L.L."/>
            <person name="Hube B."/>
            <person name="Klis F.M."/>
            <person name="Kodira C."/>
            <person name="Lennard N."/>
            <person name="Logue M.E."/>
            <person name="Martin R."/>
            <person name="Neiman A.M."/>
            <person name="Nikolaou E."/>
            <person name="Quail M.A."/>
            <person name="Quinn J."/>
            <person name="Santos M.C."/>
            <person name="Schmitzberger F.F."/>
            <person name="Sherlock G."/>
            <person name="Shah P."/>
            <person name="Silverstein K.A.T."/>
            <person name="Skrzypek M.S."/>
            <person name="Soll D."/>
            <person name="Staggs R."/>
            <person name="Stansfield I."/>
            <person name="Stumpf M.P.H."/>
            <person name="Sudbery P.E."/>
            <person name="Srikantha T."/>
            <person name="Zeng Q."/>
            <person name="Berman J."/>
            <person name="Berriman M."/>
            <person name="Heitman J."/>
            <person name="Gow N.A.R."/>
            <person name="Lorenz M.C."/>
            <person name="Birren B.W."/>
            <person name="Kellis M."/>
            <person name="Cuomo C.A."/>
        </authorList>
    </citation>
    <scope>NUCLEOTIDE SEQUENCE [LARGE SCALE GENOMIC DNA]</scope>
    <source>
        <strain>ATCC 6260 / CBS 566 / DSM 6381 / JCM 1539 / NBRC 10279 / NRRL Y-324</strain>
    </source>
</reference>
<sequence length="129" mass="14120">MAPKAEKKPASKAPAEKKPAAKKTASTDSKKRTKTRKETYSSYIYKVLKQTHPDTGISQKAMSIMNSFVNDIFERVASEASKLAAYNKKSTISAREIQTAVRLILPGELAKHAVSEATRTITKYSSAAN</sequence>
<accession>A5DJJ1</accession>